<feature type="chain" id="PRO_0000324156" description="RUN domain-containing protein 3A">
    <location>
        <begin position="1"/>
        <end position="446"/>
    </location>
</feature>
<feature type="domain" description="RUN" evidence="2">
    <location>
        <begin position="52"/>
        <end position="189"/>
    </location>
</feature>
<feature type="region of interest" description="Interaction with RAP2A" evidence="4">
    <location>
        <begin position="1"/>
        <end position="298"/>
    </location>
</feature>
<feature type="region of interest" description="Disordered" evidence="3">
    <location>
        <begin position="216"/>
        <end position="239"/>
    </location>
</feature>
<feature type="region of interest" description="Disordered" evidence="3">
    <location>
        <begin position="372"/>
        <end position="403"/>
    </location>
</feature>
<feature type="coiled-coil region" evidence="1">
    <location>
        <begin position="267"/>
        <end position="322"/>
    </location>
</feature>
<feature type="compositionally biased region" description="Polar residues" evidence="3">
    <location>
        <begin position="372"/>
        <end position="384"/>
    </location>
</feature>
<feature type="compositionally biased region" description="Basic and acidic residues" evidence="3">
    <location>
        <begin position="385"/>
        <end position="394"/>
    </location>
</feature>
<feature type="modified residue" description="Phosphothreonine" evidence="7">
    <location>
        <position position="215"/>
    </location>
</feature>
<feature type="modified residue" description="Phosphoserine" evidence="7">
    <location>
        <position position="232"/>
    </location>
</feature>
<feature type="modified residue" description="Phosphoserine" evidence="7">
    <location>
        <position position="416"/>
    </location>
</feature>
<feature type="modified residue" description="Phosphoserine" evidence="7">
    <location>
        <position position="419"/>
    </location>
</feature>
<feature type="splice variant" id="VSP_032157" description="In isoform 2." evidence="6">
    <location>
        <begin position="75"/>
        <end position="79"/>
    </location>
</feature>
<feature type="splice variant" id="VSP_032158" description="In isoform 4." evidence="5">
    <original>L</original>
    <variation>LPDPPPPPR</variation>
    <location>
        <position position="318"/>
    </location>
</feature>
<feature type="splice variant" id="VSP_032159" description="In isoform 2, isoform 3 and isoform 4." evidence="5">
    <original>KDPTP</original>
    <variation>SSEPN</variation>
    <location>
        <begin position="401"/>
        <end position="405"/>
    </location>
</feature>
<feature type="splice variant" id="VSP_032160" description="In isoform 2, isoform 3 and isoform 4." evidence="5">
    <location>
        <begin position="406"/>
        <end position="446"/>
    </location>
</feature>
<gene>
    <name type="primary">Rundc3a</name>
    <name type="synonym">Rap2ip</name>
    <name type="synonym">Rpip8</name>
</gene>
<comment type="function">
    <text evidence="4">May act as an effector of RAP2A in neuronal cells.</text>
</comment>
<comment type="subunit">
    <text evidence="4">Interacts with the GTP-bound form of RAP2A.</text>
</comment>
<comment type="alternative products">
    <event type="alternative splicing"/>
    <isoform>
        <id>O08576-1</id>
        <name>1</name>
        <sequence type="displayed"/>
    </isoform>
    <isoform>
        <id>O08576-2</id>
        <name>2</name>
        <sequence type="described" ref="VSP_032157 VSP_032159 VSP_032160"/>
    </isoform>
    <isoform>
        <id>O08576-3</id>
        <name>3</name>
        <sequence type="described" ref="VSP_032159 VSP_032160"/>
    </isoform>
    <isoform>
        <id>O08576-4</id>
        <name>4</name>
        <sequence type="described" ref="VSP_032158 VSP_032159 VSP_032160"/>
    </isoform>
</comment>
<comment type="tissue specificity">
    <text evidence="4">Brain.</text>
</comment>
<comment type="similarity">
    <text evidence="6">Belongs to the RUNDC3 family.</text>
</comment>
<proteinExistence type="evidence at protein level"/>
<sequence>MEASFVQTTMALGLPSKKASSRNVIVERRNLITVCRFSVKTLLEKYTAEPIDDSSEEFVNFAAILEQILSHRFKACAPAGPASWFSSDGQRGFWDYIRLACSKVPNNCVSSIENMENISTARAKGRAWIRVALMEKRMSEYITTALRDNRTTRRFYDSGAIMLREEATVLTGMLIGLSAIDFSFCLKGEVLDGKTPVVIDYTPYLKFTQSYDYLTDEEERHSAESSTSEDNSPEHPYLPLVTDEDSWYNKWHKMEQKFRIVYAQKGYLEELVRLRESQLKDLEAENRRLQLQLEEAAAQNQREKRELEGVILELQEQLTGLIPGDHAPLAQGSKELTTSLVNQWPSLSTLHRPEGASNSKLYRRHSFMSTEPLSAEASLSSDSQRLGEAKRDEEPWGPIGKDPTPSMLGLCGSLASIPSCKSLASFKSNECLVSDSPEGSPALSPS</sequence>
<organism>
    <name type="scientific">Mus musculus</name>
    <name type="common">Mouse</name>
    <dbReference type="NCBI Taxonomy" id="10090"/>
    <lineage>
        <taxon>Eukaryota</taxon>
        <taxon>Metazoa</taxon>
        <taxon>Chordata</taxon>
        <taxon>Craniata</taxon>
        <taxon>Vertebrata</taxon>
        <taxon>Euteleostomi</taxon>
        <taxon>Mammalia</taxon>
        <taxon>Eutheria</taxon>
        <taxon>Euarchontoglires</taxon>
        <taxon>Glires</taxon>
        <taxon>Rodentia</taxon>
        <taxon>Myomorpha</taxon>
        <taxon>Muroidea</taxon>
        <taxon>Muridae</taxon>
        <taxon>Murinae</taxon>
        <taxon>Mus</taxon>
        <taxon>Mus</taxon>
    </lineage>
</organism>
<name>RUN3A_MOUSE</name>
<evidence type="ECO:0000255" key="1"/>
<evidence type="ECO:0000255" key="2">
    <source>
        <dbReference type="PROSITE-ProRule" id="PRU00178"/>
    </source>
</evidence>
<evidence type="ECO:0000256" key="3">
    <source>
        <dbReference type="SAM" id="MobiDB-lite"/>
    </source>
</evidence>
<evidence type="ECO:0000269" key="4">
    <source>
    </source>
</evidence>
<evidence type="ECO:0000303" key="5">
    <source>
    </source>
</evidence>
<evidence type="ECO:0000305" key="6"/>
<evidence type="ECO:0007744" key="7">
    <source>
    </source>
</evidence>
<protein>
    <recommendedName>
        <fullName>RUN domain-containing protein 3A</fullName>
    </recommendedName>
    <alternativeName>
        <fullName>Rap2-interacting protein 8</fullName>
        <shortName>RPIP-8</shortName>
    </alternativeName>
</protein>
<dbReference type="EMBL" id="U73941">
    <property type="protein sequence ID" value="AAB51123.1"/>
    <property type="molecule type" value="mRNA"/>
</dbReference>
<dbReference type="EMBL" id="AL596258">
    <property type="status" value="NOT_ANNOTATED_CDS"/>
    <property type="molecule type" value="Genomic_DNA"/>
</dbReference>
<dbReference type="EMBL" id="BC046319">
    <property type="protein sequence ID" value="AAH46319.1"/>
    <property type="molecule type" value="mRNA"/>
</dbReference>
<dbReference type="CCDS" id="CCDS25497.1">
    <molecule id="O08576-1"/>
</dbReference>
<dbReference type="CCDS" id="CCDS56812.1">
    <molecule id="O08576-4"/>
</dbReference>
<dbReference type="RefSeq" id="NP_001239276.1">
    <molecule id="O08576-4"/>
    <property type="nucleotide sequence ID" value="NM_001252347.2"/>
</dbReference>
<dbReference type="RefSeq" id="NP_058039.1">
    <molecule id="O08576-1"/>
    <property type="nucleotide sequence ID" value="NM_016759.5"/>
</dbReference>
<dbReference type="RefSeq" id="XP_006533756.1">
    <molecule id="O08576-3"/>
    <property type="nucleotide sequence ID" value="XM_006533693.4"/>
</dbReference>
<dbReference type="RefSeq" id="XP_006533757.1">
    <molecule id="O08576-2"/>
    <property type="nucleotide sequence ID" value="XM_006533694.4"/>
</dbReference>
<dbReference type="SMR" id="O08576"/>
<dbReference type="BioGRID" id="206182">
    <property type="interactions" value="1"/>
</dbReference>
<dbReference type="FunCoup" id="O08576">
    <property type="interactions" value="1196"/>
</dbReference>
<dbReference type="STRING" id="10090.ENSMUSP00000006750"/>
<dbReference type="GlyGen" id="O08576">
    <property type="glycosylation" value="2 sites, 1 N-linked glycan (1 site)"/>
</dbReference>
<dbReference type="iPTMnet" id="O08576"/>
<dbReference type="PhosphoSitePlus" id="O08576"/>
<dbReference type="SwissPalm" id="O08576"/>
<dbReference type="PaxDb" id="10090-ENSMUSP00000006750"/>
<dbReference type="PeptideAtlas" id="O08576"/>
<dbReference type="ProteomicsDB" id="256643">
    <molecule id="O08576-1"/>
</dbReference>
<dbReference type="ProteomicsDB" id="256644">
    <molecule id="O08576-2"/>
</dbReference>
<dbReference type="ProteomicsDB" id="256645">
    <molecule id="O08576-3"/>
</dbReference>
<dbReference type="ProteomicsDB" id="256646">
    <molecule id="O08576-4"/>
</dbReference>
<dbReference type="Antibodypedia" id="8218">
    <property type="antibodies" value="216 antibodies from 22 providers"/>
</dbReference>
<dbReference type="DNASU" id="51799"/>
<dbReference type="Ensembl" id="ENSMUST00000006750.8">
    <molecule id="O08576-1"/>
    <property type="protein sequence ID" value="ENSMUSP00000006750.8"/>
    <property type="gene ID" value="ENSMUSG00000006575.15"/>
</dbReference>
<dbReference type="Ensembl" id="ENSMUST00000107102.8">
    <molecule id="O08576-3"/>
    <property type="protein sequence ID" value="ENSMUSP00000102719.2"/>
    <property type="gene ID" value="ENSMUSG00000006575.15"/>
</dbReference>
<dbReference type="Ensembl" id="ENSMUST00000107103.8">
    <molecule id="O08576-2"/>
    <property type="protein sequence ID" value="ENSMUSP00000102720.2"/>
    <property type="gene ID" value="ENSMUSG00000006575.15"/>
</dbReference>
<dbReference type="Ensembl" id="ENSMUST00000107105.9">
    <molecule id="O08576-4"/>
    <property type="protein sequence ID" value="ENSMUSP00000102722.3"/>
    <property type="gene ID" value="ENSMUSG00000006575.15"/>
</dbReference>
<dbReference type="GeneID" id="51799"/>
<dbReference type="KEGG" id="mmu:51799"/>
<dbReference type="UCSC" id="uc007lrq.3">
    <molecule id="O08576-4"/>
    <property type="organism name" value="mouse"/>
</dbReference>
<dbReference type="UCSC" id="uc007lrr.3">
    <molecule id="O08576-1"/>
    <property type="organism name" value="mouse"/>
</dbReference>
<dbReference type="AGR" id="MGI:1858752"/>
<dbReference type="CTD" id="10900"/>
<dbReference type="MGI" id="MGI:1858752">
    <property type="gene designation" value="Rundc3a"/>
</dbReference>
<dbReference type="VEuPathDB" id="HostDB:ENSMUSG00000006575"/>
<dbReference type="eggNOG" id="KOG4381">
    <property type="taxonomic scope" value="Eukaryota"/>
</dbReference>
<dbReference type="GeneTree" id="ENSGT00940000158922"/>
<dbReference type="HOGENOM" id="CLU_045987_0_0_1"/>
<dbReference type="InParanoid" id="O08576"/>
<dbReference type="OMA" id="FWEYVRL"/>
<dbReference type="OrthoDB" id="10029904at2759"/>
<dbReference type="PhylomeDB" id="O08576"/>
<dbReference type="TreeFam" id="TF323904"/>
<dbReference type="BioGRID-ORCS" id="51799">
    <property type="hits" value="6 hits in 77 CRISPR screens"/>
</dbReference>
<dbReference type="ChiTaRS" id="Rundc3a">
    <property type="organism name" value="mouse"/>
</dbReference>
<dbReference type="PRO" id="PR:O08576"/>
<dbReference type="Proteomes" id="UP000000589">
    <property type="component" value="Chromosome 11"/>
</dbReference>
<dbReference type="RNAct" id="O08576">
    <property type="molecule type" value="protein"/>
</dbReference>
<dbReference type="Bgee" id="ENSMUSG00000006575">
    <property type="expression patterns" value="Expressed in retinal neural layer and 165 other cell types or tissues"/>
</dbReference>
<dbReference type="GO" id="GO:0043231">
    <property type="term" value="C:intracellular membrane-bounded organelle"/>
    <property type="evidence" value="ECO:0007669"/>
    <property type="project" value="Ensembl"/>
</dbReference>
<dbReference type="GO" id="GO:0010753">
    <property type="term" value="P:positive regulation of cGMP-mediated signaling"/>
    <property type="evidence" value="ECO:0007669"/>
    <property type="project" value="Ensembl"/>
</dbReference>
<dbReference type="CDD" id="cd17699">
    <property type="entry name" value="RUN_RUNDC3A"/>
    <property type="match status" value="1"/>
</dbReference>
<dbReference type="FunFam" id="1.20.58.900:FF:000005">
    <property type="entry name" value="RUN domain-containing protein 3A isoform X1"/>
    <property type="match status" value="1"/>
</dbReference>
<dbReference type="Gene3D" id="1.20.58.900">
    <property type="match status" value="1"/>
</dbReference>
<dbReference type="InterPro" id="IPR004012">
    <property type="entry name" value="Run_dom"/>
</dbReference>
<dbReference type="InterPro" id="IPR037213">
    <property type="entry name" value="Run_dom_sf"/>
</dbReference>
<dbReference type="InterPro" id="IPR047338">
    <property type="entry name" value="RUN_RUNDC3A"/>
</dbReference>
<dbReference type="InterPro" id="IPR047340">
    <property type="entry name" value="RUNDC3A_B"/>
</dbReference>
<dbReference type="PANTHER" id="PTHR46251">
    <property type="entry name" value="RUN DOMAIN-CONTAINING 3 PROTEIN RUNDC3"/>
    <property type="match status" value="1"/>
</dbReference>
<dbReference type="PANTHER" id="PTHR46251:SF4">
    <property type="entry name" value="RUN DOMAIN-CONTAINING PROTEIN 3A"/>
    <property type="match status" value="1"/>
</dbReference>
<dbReference type="Pfam" id="PF02759">
    <property type="entry name" value="RUN"/>
    <property type="match status" value="1"/>
</dbReference>
<dbReference type="SMART" id="SM00593">
    <property type="entry name" value="RUN"/>
    <property type="match status" value="1"/>
</dbReference>
<dbReference type="SUPFAM" id="SSF140741">
    <property type="entry name" value="RUN domain-like"/>
    <property type="match status" value="1"/>
</dbReference>
<dbReference type="PROSITE" id="PS50826">
    <property type="entry name" value="RUN"/>
    <property type="match status" value="1"/>
</dbReference>
<keyword id="KW-0025">Alternative splicing</keyword>
<keyword id="KW-0175">Coiled coil</keyword>
<keyword id="KW-0597">Phosphoprotein</keyword>
<keyword id="KW-1185">Reference proteome</keyword>
<accession>O08576</accession>
<accession>A2A693</accession>
<accession>A2A694</accession>
<accession>Q80Y95</accession>
<reference key="1">
    <citation type="journal article" date="1998" name="Eur. J. Biochem.">
        <title>Identification of a specific effector of the small GTP-binding protein Rap2.</title>
        <authorList>
            <person name="Janoueix-Lerosey I."/>
            <person name="Pasheva E."/>
            <person name="de Tand M.-F."/>
            <person name="Tavitian A."/>
            <person name="de Gunzburg J."/>
        </authorList>
    </citation>
    <scope>NUCLEOTIDE SEQUENCE [MRNA] (ISOFORM 1)</scope>
    <scope>IDENTIFICATION OF ISOFORM 2</scope>
    <scope>FUNCTION</scope>
    <scope>INTERACTION WITH RAP2A</scope>
    <scope>TISSUE SPECIFICITY</scope>
</reference>
<reference key="2">
    <citation type="journal article" date="2009" name="PLoS Biol.">
        <title>Lineage-specific biology revealed by a finished genome assembly of the mouse.</title>
        <authorList>
            <person name="Church D.M."/>
            <person name="Goodstadt L."/>
            <person name="Hillier L.W."/>
            <person name="Zody M.C."/>
            <person name="Goldstein S."/>
            <person name="She X."/>
            <person name="Bult C.J."/>
            <person name="Agarwala R."/>
            <person name="Cherry J.L."/>
            <person name="DiCuccio M."/>
            <person name="Hlavina W."/>
            <person name="Kapustin Y."/>
            <person name="Meric P."/>
            <person name="Maglott D."/>
            <person name="Birtle Z."/>
            <person name="Marques A.C."/>
            <person name="Graves T."/>
            <person name="Zhou S."/>
            <person name="Teague B."/>
            <person name="Potamousis K."/>
            <person name="Churas C."/>
            <person name="Place M."/>
            <person name="Herschleb J."/>
            <person name="Runnheim R."/>
            <person name="Forrest D."/>
            <person name="Amos-Landgraf J."/>
            <person name="Schwartz D.C."/>
            <person name="Cheng Z."/>
            <person name="Lindblad-Toh K."/>
            <person name="Eichler E.E."/>
            <person name="Ponting C.P."/>
        </authorList>
    </citation>
    <scope>NUCLEOTIDE SEQUENCE [LARGE SCALE GENOMIC DNA]</scope>
    <scope>ALTERNATIVE SPLICING (ISOFORMS 2 AND 3)</scope>
    <source>
        <strain>C57BL/6J</strain>
    </source>
</reference>
<reference key="3">
    <citation type="journal article" date="2004" name="Genome Res.">
        <title>The status, quality, and expansion of the NIH full-length cDNA project: the Mammalian Gene Collection (MGC).</title>
        <authorList>
            <consortium name="The MGC Project Team"/>
        </authorList>
    </citation>
    <scope>NUCLEOTIDE SEQUENCE [LARGE SCALE MRNA] (ISOFORM 4)</scope>
    <source>
        <tissue>Olfactory epithelium</tissue>
    </source>
</reference>
<reference key="4">
    <citation type="journal article" date="2010" name="Cell">
        <title>A tissue-specific atlas of mouse protein phosphorylation and expression.</title>
        <authorList>
            <person name="Huttlin E.L."/>
            <person name="Jedrychowski M.P."/>
            <person name="Elias J.E."/>
            <person name="Goswami T."/>
            <person name="Rad R."/>
            <person name="Beausoleil S.A."/>
            <person name="Villen J."/>
            <person name="Haas W."/>
            <person name="Sowa M.E."/>
            <person name="Gygi S.P."/>
        </authorList>
    </citation>
    <scope>PHOSPHORYLATION [LARGE SCALE ANALYSIS] AT THR-215; SER-232; SER-416 AND SER-419</scope>
    <scope>IDENTIFICATION BY MASS SPECTROMETRY [LARGE SCALE ANALYSIS]</scope>
    <source>
        <tissue>Brain</tissue>
    </source>
</reference>